<protein>
    <recommendedName>
        <fullName evidence="2">Dihydrolipoyllysine-residue acetyltransferase component of pyruvate dehydrogenase complex, mitochondrial</fullName>
        <ecNumber evidence="2">2.3.1.12</ecNumber>
    </recommendedName>
    <alternativeName>
        <fullName evidence="1">Dihydrolipoamide acetyltransferase component of pyruvate dehydrogenase complex</fullName>
    </alternativeName>
    <alternativeName>
        <fullName>Pyruvate dehydrogenase complex component E2</fullName>
        <shortName evidence="2">PDC-E2</shortName>
        <shortName>PDCE2</shortName>
    </alternativeName>
</protein>
<gene>
    <name evidence="2" type="primary">DLAT</name>
</gene>
<dbReference type="EC" id="2.3.1.12" evidence="2"/>
<dbReference type="SMR" id="P86197"/>
<dbReference type="STRING" id="10036.ENSMAUP00000015379"/>
<dbReference type="Ensembl" id="ENSMAUT00000019306">
    <property type="protein sequence ID" value="ENSMAUP00000015379"/>
    <property type="gene ID" value="ENSMAUG00000014831"/>
</dbReference>
<dbReference type="eggNOG" id="KOG0557">
    <property type="taxonomic scope" value="Eukaryota"/>
</dbReference>
<dbReference type="Proteomes" id="UP000189706">
    <property type="component" value="Unplaced"/>
</dbReference>
<dbReference type="GO" id="GO:0005759">
    <property type="term" value="C:mitochondrial matrix"/>
    <property type="evidence" value="ECO:0007669"/>
    <property type="project" value="UniProtKB-SubCell"/>
</dbReference>
<dbReference type="GO" id="GO:0045254">
    <property type="term" value="C:pyruvate dehydrogenase complex"/>
    <property type="evidence" value="ECO:0007669"/>
    <property type="project" value="Ensembl"/>
</dbReference>
<dbReference type="GO" id="GO:0004742">
    <property type="term" value="F:dihydrolipoyllysine-residue acetyltransferase activity"/>
    <property type="evidence" value="ECO:0000250"/>
    <property type="project" value="UniProtKB"/>
</dbReference>
<dbReference type="GO" id="GO:0042802">
    <property type="term" value="F:identical protein binding"/>
    <property type="evidence" value="ECO:0007669"/>
    <property type="project" value="Ensembl"/>
</dbReference>
<dbReference type="GO" id="GO:0034604">
    <property type="term" value="F:pyruvate dehydrogenase (NAD+) activity"/>
    <property type="evidence" value="ECO:0007669"/>
    <property type="project" value="Ensembl"/>
</dbReference>
<dbReference type="GO" id="GO:0006006">
    <property type="term" value="P:glucose metabolic process"/>
    <property type="evidence" value="ECO:0007669"/>
    <property type="project" value="UniProtKB-KW"/>
</dbReference>
<dbReference type="GO" id="GO:0042867">
    <property type="term" value="P:pyruvate catabolic process"/>
    <property type="evidence" value="ECO:0007669"/>
    <property type="project" value="Ensembl"/>
</dbReference>
<dbReference type="GO" id="GO:0006099">
    <property type="term" value="P:tricarboxylic acid cycle"/>
    <property type="evidence" value="ECO:0000250"/>
    <property type="project" value="UniProtKB"/>
</dbReference>
<dbReference type="CDD" id="cd06849">
    <property type="entry name" value="lipoyl_domain"/>
    <property type="match status" value="1"/>
</dbReference>
<dbReference type="FunFam" id="2.40.50.100:FF:000010">
    <property type="entry name" value="Acetyltransferase component of pyruvate dehydrogenase complex"/>
    <property type="match status" value="1"/>
</dbReference>
<dbReference type="FunFam" id="3.30.559.10:FF:000003">
    <property type="entry name" value="Acetyltransferase component of pyruvate dehydrogenase complex"/>
    <property type="match status" value="1"/>
</dbReference>
<dbReference type="FunFam" id="4.10.320.10:FF:000005">
    <property type="entry name" value="Acetyltransferase component of pyruvate dehydrogenase complex"/>
    <property type="match status" value="1"/>
</dbReference>
<dbReference type="Gene3D" id="2.40.50.100">
    <property type="match status" value="2"/>
</dbReference>
<dbReference type="Gene3D" id="3.30.559.10">
    <property type="entry name" value="Chloramphenicol acetyltransferase-like domain"/>
    <property type="match status" value="1"/>
</dbReference>
<dbReference type="Gene3D" id="4.10.320.10">
    <property type="entry name" value="E3-binding domain"/>
    <property type="match status" value="1"/>
</dbReference>
<dbReference type="InterPro" id="IPR003016">
    <property type="entry name" value="2-oxoA_DH_lipoyl-BS"/>
</dbReference>
<dbReference type="InterPro" id="IPR001078">
    <property type="entry name" value="2-oxoacid_DH_actylTfrase"/>
</dbReference>
<dbReference type="InterPro" id="IPR000089">
    <property type="entry name" value="Biotin_lipoyl"/>
</dbReference>
<dbReference type="InterPro" id="IPR023213">
    <property type="entry name" value="CAT-like_dom_sf"/>
</dbReference>
<dbReference type="InterPro" id="IPR045257">
    <property type="entry name" value="E2/Pdx1"/>
</dbReference>
<dbReference type="InterPro" id="IPR036625">
    <property type="entry name" value="E3-bd_dom_sf"/>
</dbReference>
<dbReference type="InterPro" id="IPR006257">
    <property type="entry name" value="LAT1"/>
</dbReference>
<dbReference type="InterPro" id="IPR004167">
    <property type="entry name" value="PSBD"/>
</dbReference>
<dbReference type="InterPro" id="IPR011053">
    <property type="entry name" value="Single_hybrid_motif"/>
</dbReference>
<dbReference type="NCBIfam" id="TIGR01349">
    <property type="entry name" value="PDHac_trf_mito"/>
    <property type="match status" value="1"/>
</dbReference>
<dbReference type="PANTHER" id="PTHR23151">
    <property type="entry name" value="DIHYDROLIPOAMIDE ACETYL/SUCCINYL-TRANSFERASE-RELATED"/>
    <property type="match status" value="1"/>
</dbReference>
<dbReference type="PANTHER" id="PTHR23151:SF90">
    <property type="entry name" value="DIHYDROLIPOYLLYSINE-RESIDUE ACETYLTRANSFERASE COMPONENT OF PYRUVATE DEHYDROGENASE COMPLEX, MITOCHONDRIAL-RELATED"/>
    <property type="match status" value="1"/>
</dbReference>
<dbReference type="Pfam" id="PF00198">
    <property type="entry name" value="2-oxoacid_dh"/>
    <property type="match status" value="1"/>
</dbReference>
<dbReference type="Pfam" id="PF00364">
    <property type="entry name" value="Biotin_lipoyl"/>
    <property type="match status" value="1"/>
</dbReference>
<dbReference type="Pfam" id="PF02817">
    <property type="entry name" value="E3_binding"/>
    <property type="match status" value="1"/>
</dbReference>
<dbReference type="SUPFAM" id="SSF52777">
    <property type="entry name" value="CoA-dependent acyltransferases"/>
    <property type="match status" value="1"/>
</dbReference>
<dbReference type="SUPFAM" id="SSF47005">
    <property type="entry name" value="Peripheral subunit-binding domain of 2-oxo acid dehydrogenase complex"/>
    <property type="match status" value="1"/>
</dbReference>
<dbReference type="SUPFAM" id="SSF51230">
    <property type="entry name" value="Single hybrid motif"/>
    <property type="match status" value="2"/>
</dbReference>
<dbReference type="PROSITE" id="PS50968">
    <property type="entry name" value="BIOTINYL_LIPOYL"/>
    <property type="match status" value="1"/>
</dbReference>
<dbReference type="PROSITE" id="PS00189">
    <property type="entry name" value="LIPOYL"/>
    <property type="match status" value="1"/>
</dbReference>
<dbReference type="PROSITE" id="PS51826">
    <property type="entry name" value="PSBD"/>
    <property type="match status" value="1"/>
</dbReference>
<organism>
    <name type="scientific">Mesocricetus auratus</name>
    <name type="common">Golden hamster</name>
    <dbReference type="NCBI Taxonomy" id="10036"/>
    <lineage>
        <taxon>Eukaryota</taxon>
        <taxon>Metazoa</taxon>
        <taxon>Chordata</taxon>
        <taxon>Craniata</taxon>
        <taxon>Vertebrata</taxon>
        <taxon>Euteleostomi</taxon>
        <taxon>Mammalia</taxon>
        <taxon>Eutheria</taxon>
        <taxon>Euarchontoglires</taxon>
        <taxon>Glires</taxon>
        <taxon>Rodentia</taxon>
        <taxon>Myomorpha</taxon>
        <taxon>Muroidea</taxon>
        <taxon>Cricetidae</taxon>
        <taxon>Cricetinae</taxon>
        <taxon>Mesocricetus</taxon>
    </lineage>
</organism>
<keyword id="KW-0007">Acetylation</keyword>
<keyword id="KW-0012">Acyltransferase</keyword>
<keyword id="KW-0119">Carbohydrate metabolism</keyword>
<keyword id="KW-0313">Glucose metabolism</keyword>
<keyword id="KW-0450">Lipoyl</keyword>
<keyword id="KW-0496">Mitochondrion</keyword>
<keyword id="KW-0597">Phosphoprotein</keyword>
<keyword id="KW-1185">Reference proteome</keyword>
<keyword id="KW-0677">Repeat</keyword>
<keyword id="KW-0808">Transferase</keyword>
<keyword id="KW-0809">Transit peptide</keyword>
<keyword id="KW-0816">Tricarboxylic acid cycle</keyword>
<comment type="function">
    <text evidence="3">As part of the pyruvate dehydrogenase complex, catalyzes the transfers of an acetyl group to a lipoic acid moiety. The pyruvate dehydrogenase complex, catalyzes the overall conversion of pyruvate to acetyl-CoA and CO(2), and thereby links cytoplasmic glycolysis and the mitochondrial tricarboxylic acid (TCA) cycle.</text>
</comment>
<comment type="catalytic activity">
    <reaction evidence="3">
        <text>N(6)-[(R)-dihydrolipoyl]-L-lysyl-[protein] + acetyl-CoA = N(6)-[(R)-S(8)-acetyldihydrolipoyl]-L-lysyl-[protein] + CoA</text>
        <dbReference type="Rhea" id="RHEA:17017"/>
        <dbReference type="Rhea" id="RHEA-COMP:10475"/>
        <dbReference type="Rhea" id="RHEA-COMP:10478"/>
        <dbReference type="ChEBI" id="CHEBI:57287"/>
        <dbReference type="ChEBI" id="CHEBI:57288"/>
        <dbReference type="ChEBI" id="CHEBI:83100"/>
        <dbReference type="ChEBI" id="CHEBI:83111"/>
        <dbReference type="EC" id="2.3.1.12"/>
    </reaction>
    <physiologicalReaction direction="left-to-right" evidence="3">
        <dbReference type="Rhea" id="RHEA:17018"/>
    </physiologicalReaction>
</comment>
<comment type="cofactor">
    <cofactor evidence="2">
        <name>(R)-lipoate</name>
        <dbReference type="ChEBI" id="CHEBI:83088"/>
    </cofactor>
    <text evidence="2">Binds 2 lipoyl cofactors covalently.</text>
</comment>
<comment type="subunit">
    <text evidence="2 3">Part of the pyruvate dehydrogenase complex (PDHc) that is a multi-enzyme complex composed of multiple copies of three enzymes, pyruvate dehydrogenase (subunits PDH1A and PDHB, E1 component), dihydrolipoamide acetyltransferase (DLAT, E2 component), and dihydrolipoamide dehydrogenase (DLD, E3 component) to which is added an additional protein the E3-binding protein (PDHX, E3BP) (By similarity). In terms of structural architecture, the E2 and E3BP components assemble into a 60meric central core with icosahedral symmetry (By similarity). The central core is decorated with E1 and E3 proteins (By similarity). Currently, two alternative models for the E2:E3BP stoichiometry are considered as being either 48:12 (E2(48)-E3BP(12)) or 40:20 (E2(40)-E3BP(20)). Interacts with PDK2 and PDK3. Interacts with SIRT4. Interacts with PDHB (By similarity).</text>
</comment>
<comment type="subcellular location">
    <subcellularLocation>
        <location evidence="1">Mitochondrion matrix</location>
    </subcellularLocation>
</comment>
<comment type="tissue specificity">
    <text evidence="11">Detected at higher levels in cauda epididymal spermatazoa than in caput epididymal spermatazoa (at protein level).</text>
</comment>
<comment type="PTM">
    <text evidence="2">Delipoylated at Lys-131 by SIRT4, delipoylation decreases the PHD complex activity.</text>
</comment>
<comment type="similarity">
    <text evidence="7">Belongs to the 2-oxoacid dehydrogenase family.</text>
</comment>
<feature type="transit peptide" description="Mitochondrion" evidence="2">
    <location>
        <begin position="1"/>
        <end position="85"/>
    </location>
</feature>
<feature type="chain" id="PRO_0000394399" description="Dihydrolipoyllysine-residue acetyltransferase component of pyruvate dehydrogenase complex, mitochondrial">
    <location>
        <begin position="86"/>
        <end position="637"/>
    </location>
</feature>
<feature type="domain" description="Lipoyl-binding 1" evidence="8">
    <location>
        <begin position="90"/>
        <end position="166"/>
    </location>
</feature>
<feature type="domain" description="Lipoyl-binding 2" evidence="8">
    <location>
        <begin position="218"/>
        <end position="287"/>
    </location>
</feature>
<feature type="domain" description="Peripheral subunit-binding (PSBD)" evidence="9">
    <location>
        <begin position="345"/>
        <end position="382"/>
    </location>
</feature>
<feature type="region of interest" description="Disordered" evidence="10">
    <location>
        <begin position="80"/>
        <end position="100"/>
    </location>
</feature>
<feature type="region of interest" description="Disordered" evidence="10">
    <location>
        <begin position="189"/>
        <end position="219"/>
    </location>
</feature>
<feature type="region of interest" description="Disordered" evidence="10">
    <location>
        <begin position="307"/>
        <end position="340"/>
    </location>
</feature>
<feature type="compositionally biased region" description="Low complexity" evidence="10">
    <location>
        <begin position="201"/>
        <end position="211"/>
    </location>
</feature>
<feature type="compositionally biased region" description="Pro residues" evidence="10">
    <location>
        <begin position="310"/>
        <end position="321"/>
    </location>
</feature>
<feature type="compositionally biased region" description="Low complexity" evidence="10">
    <location>
        <begin position="322"/>
        <end position="333"/>
    </location>
</feature>
<feature type="active site" evidence="6 7">
    <location>
        <position position="610"/>
    </location>
</feature>
<feature type="active site" evidence="6 7">
    <location>
        <position position="614"/>
    </location>
</feature>
<feature type="binding site" evidence="4">
    <location>
        <position position="451"/>
    </location>
    <ligand>
        <name>CoA</name>
        <dbReference type="ChEBI" id="CHEBI:57287"/>
    </ligand>
</feature>
<feature type="binding site" evidence="4">
    <location>
        <position position="465"/>
    </location>
    <ligand>
        <name>CoA</name>
        <dbReference type="ChEBI" id="CHEBI:57287"/>
    </ligand>
</feature>
<feature type="binding site" evidence="4">
    <location>
        <position position="556"/>
    </location>
    <ligand>
        <name>CoA</name>
        <dbReference type="ChEBI" id="CHEBI:57287"/>
    </ligand>
</feature>
<feature type="binding site" evidence="4">
    <location>
        <position position="557"/>
    </location>
    <ligand>
        <name>CoA</name>
        <dbReference type="ChEBI" id="CHEBI:57287"/>
    </ligand>
</feature>
<feature type="binding site" evidence="4">
    <location>
        <position position="581"/>
    </location>
    <ligand>
        <name>CoA</name>
        <dbReference type="ChEBI" id="CHEBI:57287"/>
    </ligand>
</feature>
<feature type="modified residue" description="Phosphoserine" evidence="2">
    <location>
        <position position="99"/>
    </location>
</feature>
<feature type="modified residue" description="N6-lipoyllysine" evidence="2 8">
    <location>
        <position position="131"/>
    </location>
</feature>
<feature type="modified residue" description="N6-acetyllysine" evidence="2">
    <location>
        <position position="456"/>
    </location>
</feature>
<feature type="modified residue" description="N6-succinyllysine" evidence="5">
    <location>
        <position position="463"/>
    </location>
</feature>
<feature type="modified residue" description="N6-succinyllysine" evidence="5">
    <location>
        <position position="537"/>
    </location>
</feature>
<reference key="1">
    <citation type="journal article" date="2010" name="Asian J. Androl.">
        <title>Glucose-regulated protein precursor (GRP78) and tumor rejection antigen (GP96) are unique to hamster caput epididymal spermatozoa.</title>
        <authorList>
            <person name="Kameshwari D.B."/>
            <person name="Bhande S."/>
            <person name="Sundaram C.S."/>
            <person name="Kota V."/>
            <person name="Siva A.B."/>
            <person name="Shivaji S."/>
        </authorList>
    </citation>
    <scope>IDENTIFICATION BY MASS SPECTROMETRY</scope>
    <scope>TISSUE SPECIFICITY</scope>
</reference>
<proteinExistence type="evidence at protein level"/>
<evidence type="ECO:0000250" key="1">
    <source>
        <dbReference type="UniProtKB" id="P08461"/>
    </source>
</evidence>
<evidence type="ECO:0000250" key="2">
    <source>
        <dbReference type="UniProtKB" id="P10515"/>
    </source>
</evidence>
<evidence type="ECO:0000250" key="3">
    <source>
        <dbReference type="UniProtKB" id="P11180"/>
    </source>
</evidence>
<evidence type="ECO:0000250" key="4">
    <source>
        <dbReference type="UniProtKB" id="P11181"/>
    </source>
</evidence>
<evidence type="ECO:0000250" key="5">
    <source>
        <dbReference type="UniProtKB" id="Q8BMF4"/>
    </source>
</evidence>
<evidence type="ECO:0000250" key="6">
    <source>
        <dbReference type="UniProtKB" id="Q9N0F1"/>
    </source>
</evidence>
<evidence type="ECO:0000255" key="7"/>
<evidence type="ECO:0000255" key="8">
    <source>
        <dbReference type="PROSITE-ProRule" id="PRU01066"/>
    </source>
</evidence>
<evidence type="ECO:0000255" key="9">
    <source>
        <dbReference type="PROSITE-ProRule" id="PRU01170"/>
    </source>
</evidence>
<evidence type="ECO:0000256" key="10">
    <source>
        <dbReference type="SAM" id="MobiDB-lite"/>
    </source>
</evidence>
<evidence type="ECO:0000269" key="11">
    <source>
    </source>
</evidence>
<sequence>MWRVCVRRAQSAVPRAGLGDRWAVLKDGPVAPCGSSRAGPGAARFSSGTPSYGVRFLCGWSSGSDTAPRNRLLRQLLGSPGRRSYSLPPHQKVPLPSLSPTMQAGTIARWEKKEGEKINEGDLIAEVETDKATVGFESLEECYMAKILVAEGTRDIPIGSIICITVGKPEDIEAFKNYTLDSAAATTPQAAAPTPAPAPCAAPTAPSAKAPGSSYPPHMQVSAVGEQRLESWKLRLGVHLSERPCLKEIRETAQDSFEVQEEGYLAKILIPEGTRDVPLGAPLCIIVEKQEDIAAFADYRPMEVTSLKPQAPPPVPPPVAAAPPTAQPLAPTPSGLPAGPKGRVFVSPLAKKLAAERGIDLTQVKGTGPEGRIIKKDIDSFVPSKAAPAPAAAMAPPGPRVAPAPAAGVFTDVPISNIRRVIAQRLMQSKQTIPHYYLSIDVNMGEVLLVRKELNKMLEGKGKISVNDFIIKASALACLKVPEANSSWMDTVIRQNHVVDVSVAVSTPAGLITPIVFNAHIKGLETIASDVVSLASKAREGKLQPHEFQGGTFTISNLGMFGIKNFSAIINPPQACILAIGASEDKLIPADNEKGFDVASVMSVTLSCDHRVVDGAVGAQWLAEFKKYLEKPITMLL</sequence>
<accession>P86197</accession>
<name>ODP2_MESAU</name>